<name>YPDJ_ECOLI</name>
<accession>Q2EET0</accession>
<accession>A0A385XJL1</accession>
<accession>Q2MAK3</accession>
<feature type="chain" id="PRO_0000252231" description="Protein YpdJ">
    <location>
        <begin position="1"/>
        <end position="46"/>
    </location>
</feature>
<proteinExistence type="predicted"/>
<keyword id="KW-1185">Reference proteome</keyword>
<protein>
    <recommendedName>
        <fullName>Protein YpdJ</fullName>
    </recommendedName>
</protein>
<dbReference type="EMBL" id="U00096">
    <property type="protein sequence ID" value="AYC08233.1"/>
    <property type="molecule type" value="Genomic_DNA"/>
</dbReference>
<dbReference type="EMBL" id="AP009048">
    <property type="protein sequence ID" value="BAE76703.1"/>
    <property type="molecule type" value="Genomic_DNA"/>
</dbReference>
<dbReference type="FunCoup" id="Q2EET0">
    <property type="interactions" value="5"/>
</dbReference>
<dbReference type="EnsemblBacteria" id="AYC08233">
    <property type="protein sequence ID" value="AYC08233"/>
    <property type="gene ID" value="b4545"/>
</dbReference>
<dbReference type="KEGG" id="ecj:JW5386"/>
<dbReference type="HOGENOM" id="CLU_3209198_0_0_6"/>
<dbReference type="InParanoid" id="Q2EET0"/>
<dbReference type="BioCyc" id="EcoCyc:MONOMER0-2683"/>
<dbReference type="PRO" id="PR:Q2EET0"/>
<dbReference type="Proteomes" id="UP000000625">
    <property type="component" value="Chromosome"/>
</dbReference>
<gene>
    <name type="primary">ypdJ</name>
    <name type="ordered locus">b4545</name>
    <name type="ordered locus">JW5386</name>
</gene>
<reference key="1">
    <citation type="journal article" date="1997" name="Science">
        <title>The complete genome sequence of Escherichia coli K-12.</title>
        <authorList>
            <person name="Blattner F.R."/>
            <person name="Plunkett G. III"/>
            <person name="Bloch C.A."/>
            <person name="Perna N.T."/>
            <person name="Burland V."/>
            <person name="Riley M."/>
            <person name="Collado-Vides J."/>
            <person name="Glasner J.D."/>
            <person name="Rode C.K."/>
            <person name="Mayhew G.F."/>
            <person name="Gregor J."/>
            <person name="Davis N.W."/>
            <person name="Kirkpatrick H.A."/>
            <person name="Goeden M.A."/>
            <person name="Rose D.J."/>
            <person name="Mau B."/>
            <person name="Shao Y."/>
        </authorList>
    </citation>
    <scope>NUCLEOTIDE SEQUENCE [LARGE SCALE GENOMIC DNA]</scope>
    <source>
        <strain>K12 / MG1655 / ATCC 47076</strain>
    </source>
</reference>
<reference key="2">
    <citation type="journal article" date="2006" name="Mol. Syst. Biol.">
        <title>Highly accurate genome sequences of Escherichia coli K-12 strains MG1655 and W3110.</title>
        <authorList>
            <person name="Hayashi K."/>
            <person name="Morooka N."/>
            <person name="Yamamoto Y."/>
            <person name="Fujita K."/>
            <person name="Isono K."/>
            <person name="Choi S."/>
            <person name="Ohtsubo E."/>
            <person name="Baba T."/>
            <person name="Wanner B.L."/>
            <person name="Mori H."/>
            <person name="Horiuchi T."/>
        </authorList>
    </citation>
    <scope>NUCLEOTIDE SEQUENCE [LARGE SCALE GENOMIC DNA]</scope>
    <source>
        <strain>K12 / W3110 / ATCC 27325 / DSM 5911</strain>
    </source>
</reference>
<reference key="3">
    <citation type="journal article" date="2013" name="Biochem. Biophys. Res. Commun.">
        <title>Four products from Escherichia coli pseudogenes increase hydrogen production.</title>
        <authorList>
            <person name="Mohd Yusoff M.Z."/>
            <person name="Hashiguchi Y."/>
            <person name="Maeda T."/>
            <person name="Wood T.K."/>
        </authorList>
    </citation>
    <scope>FUNCTION</scope>
    <scope>DISRUPTION PHENOTYPE</scope>
    <source>
        <strain>K12 / BW25113</strain>
    </source>
</reference>
<comment type="function">
    <text evidence="1">May be involved in H(2) production during fermentative growth.</text>
</comment>
<comment type="disruption phenotype">
    <text evidence="1">Loss of H(2) production on minimal glucose, complex glucose and complex formate medium. Alters production of organic acids when grown on minimal glucose medium. This phenotype was not complemented by reintroduction of the ypdJ gene.</text>
</comment>
<comment type="miscellaneous">
    <text evidence="2">It is missing about 100 C-terminal amino acids compared to orthologs.</text>
</comment>
<comment type="miscellaneous">
    <text evidence="2">Encoded by the CPS-53 (KpLE1) prophage.</text>
</comment>
<sequence length="46" mass="5315">MGYDSRLDHLAATSWYPFFNNVTTRGEIIEPYSLTLDEACQFLKIS</sequence>
<organism>
    <name type="scientific">Escherichia coli (strain K12)</name>
    <dbReference type="NCBI Taxonomy" id="83333"/>
    <lineage>
        <taxon>Bacteria</taxon>
        <taxon>Pseudomonadati</taxon>
        <taxon>Pseudomonadota</taxon>
        <taxon>Gammaproteobacteria</taxon>
        <taxon>Enterobacterales</taxon>
        <taxon>Enterobacteriaceae</taxon>
        <taxon>Escherichia</taxon>
    </lineage>
</organism>
<evidence type="ECO:0000269" key="1">
    <source>
    </source>
</evidence>
<evidence type="ECO:0000305" key="2"/>